<accession>C4KIE7</accession>
<dbReference type="EMBL" id="CP001402">
    <property type="protein sequence ID" value="ACR42361.1"/>
    <property type="molecule type" value="Genomic_DNA"/>
</dbReference>
<dbReference type="RefSeq" id="WP_012713922.1">
    <property type="nucleotide sequence ID" value="NC_012726.1"/>
</dbReference>
<dbReference type="SMR" id="C4KIE7"/>
<dbReference type="KEGG" id="sid:M164_1757"/>
<dbReference type="HOGENOM" id="CLU_183474_0_0_2"/>
<dbReference type="Proteomes" id="UP000001479">
    <property type="component" value="Chromosome"/>
</dbReference>
<dbReference type="GO" id="GO:0022625">
    <property type="term" value="C:cytosolic large ribosomal subunit"/>
    <property type="evidence" value="ECO:0007669"/>
    <property type="project" value="TreeGrafter"/>
</dbReference>
<dbReference type="GO" id="GO:0003723">
    <property type="term" value="F:RNA binding"/>
    <property type="evidence" value="ECO:0007669"/>
    <property type="project" value="InterPro"/>
</dbReference>
<dbReference type="GO" id="GO:0003735">
    <property type="term" value="F:structural constituent of ribosome"/>
    <property type="evidence" value="ECO:0007669"/>
    <property type="project" value="InterPro"/>
</dbReference>
<dbReference type="GO" id="GO:0042273">
    <property type="term" value="P:ribosomal large subunit biogenesis"/>
    <property type="evidence" value="ECO:0007669"/>
    <property type="project" value="TreeGrafter"/>
</dbReference>
<dbReference type="GO" id="GO:0006412">
    <property type="term" value="P:translation"/>
    <property type="evidence" value="ECO:0007669"/>
    <property type="project" value="UniProtKB-UniRule"/>
</dbReference>
<dbReference type="CDD" id="cd23702">
    <property type="entry name" value="eL14"/>
    <property type="match status" value="1"/>
</dbReference>
<dbReference type="FunFam" id="2.30.30.30:FF:000045">
    <property type="entry name" value="50S ribosomal protein L14e"/>
    <property type="match status" value="1"/>
</dbReference>
<dbReference type="Gene3D" id="2.30.30.30">
    <property type="match status" value="1"/>
</dbReference>
<dbReference type="HAMAP" id="MF_00721">
    <property type="entry name" value="Ribosomal_eL14"/>
    <property type="match status" value="1"/>
</dbReference>
<dbReference type="InterPro" id="IPR014722">
    <property type="entry name" value="Rib_uL2_dom2"/>
</dbReference>
<dbReference type="InterPro" id="IPR039660">
    <property type="entry name" value="Ribosomal_eL14"/>
</dbReference>
<dbReference type="InterPro" id="IPR023651">
    <property type="entry name" value="Ribosomal_eL14_arc"/>
</dbReference>
<dbReference type="InterPro" id="IPR008991">
    <property type="entry name" value="Translation_prot_SH3-like_sf"/>
</dbReference>
<dbReference type="NCBIfam" id="NF003320">
    <property type="entry name" value="PRK04333.1"/>
    <property type="match status" value="1"/>
</dbReference>
<dbReference type="PANTHER" id="PTHR11127">
    <property type="entry name" value="60S RIBOSOMAL PROTEIN L14"/>
    <property type="match status" value="1"/>
</dbReference>
<dbReference type="PANTHER" id="PTHR11127:SF2">
    <property type="entry name" value="LARGE RIBOSOMAL SUBUNIT PROTEIN EL14"/>
    <property type="match status" value="1"/>
</dbReference>
<dbReference type="SUPFAM" id="SSF50104">
    <property type="entry name" value="Translation proteins SH3-like domain"/>
    <property type="match status" value="1"/>
</dbReference>
<organism>
    <name type="scientific">Saccharolobus islandicus (strain M.16.4 / Kamchatka #3)</name>
    <name type="common">Sulfolobus islandicus</name>
    <dbReference type="NCBI Taxonomy" id="426118"/>
    <lineage>
        <taxon>Archaea</taxon>
        <taxon>Thermoproteota</taxon>
        <taxon>Thermoprotei</taxon>
        <taxon>Sulfolobales</taxon>
        <taxon>Sulfolobaceae</taxon>
        <taxon>Saccharolobus</taxon>
    </lineage>
</organism>
<protein>
    <recommendedName>
        <fullName evidence="1">Large ribosomal subunit protein eL14</fullName>
    </recommendedName>
    <alternativeName>
        <fullName evidence="2">50S ribosomal protein L14e</fullName>
    </alternativeName>
</protein>
<reference key="1">
    <citation type="journal article" date="2009" name="Proc. Natl. Acad. Sci. U.S.A.">
        <title>Biogeography of the Sulfolobus islandicus pan-genome.</title>
        <authorList>
            <person name="Reno M.L."/>
            <person name="Held N.L."/>
            <person name="Fields C.J."/>
            <person name="Burke P.V."/>
            <person name="Whitaker R.J."/>
        </authorList>
    </citation>
    <scope>NUCLEOTIDE SEQUENCE [LARGE SCALE GENOMIC DNA]</scope>
    <source>
        <strain>M.16.4 / Kamchatka #3</strain>
    </source>
</reference>
<proteinExistence type="inferred from homology"/>
<feature type="chain" id="PRO_1000212706" description="Large ribosomal subunit protein eL14">
    <location>
        <begin position="1"/>
        <end position="96"/>
    </location>
</feature>
<sequence length="96" mass="10784">MPAIEVGRICVKVKGREAGSKCVIVDIIDDNFVLVTGPKDISGVKRRRVNILHLEPTDKKIDIQKGASDEEVRKKIEEAGLTEYMKERIKIKIPTL</sequence>
<gene>
    <name evidence="1" type="primary">rpl14e</name>
    <name type="ordered locus">M164_1757</name>
</gene>
<keyword id="KW-0687">Ribonucleoprotein</keyword>
<keyword id="KW-0689">Ribosomal protein</keyword>
<evidence type="ECO:0000255" key="1">
    <source>
        <dbReference type="HAMAP-Rule" id="MF_00721"/>
    </source>
</evidence>
<evidence type="ECO:0000305" key="2"/>
<name>RL14E_SACI6</name>
<comment type="similarity">
    <text evidence="1">Belongs to the eukaryotic ribosomal protein eL14 family.</text>
</comment>